<organism>
    <name type="scientific">Aliivibrio fischeri (strain ATCC 700601 / ES114)</name>
    <name type="common">Vibrio fischeri</name>
    <dbReference type="NCBI Taxonomy" id="312309"/>
    <lineage>
        <taxon>Bacteria</taxon>
        <taxon>Pseudomonadati</taxon>
        <taxon>Pseudomonadota</taxon>
        <taxon>Gammaproteobacteria</taxon>
        <taxon>Vibrionales</taxon>
        <taxon>Vibrionaceae</taxon>
        <taxon>Aliivibrio</taxon>
    </lineage>
</organism>
<gene>
    <name evidence="1" type="primary">pyrC</name>
    <name type="ordered locus">VF_A0412</name>
</gene>
<accession>Q5E0G4</accession>
<sequence>MTTLTITRPDDWHLHLRDGDVLTDTVRDSGRYNGRALIMPNLVPPVTTTEQALSYRERIQAENKSDSFAPLMSLYLTEKTTSEEIRKAKATGHIVAAKLYPAGATTNSDSGVSDVKNVYPILKTMQEEGMLLLIHGEVTTHDIDIFDREKTFLDTVLAPIVNDFPELKIVLEHITTKDAADFVKNAGPNVAATITAHHLLFNRNHMLVGGIKPHFYCLPILKRNTHQQALVEAATSGNPKFFLGTDSAPHAKDKKEAACGCAGSYTAHASIELYAEVFENEGKLENLEAFASFNGPDFYNLPRNTDTITLVKEAWIAPETMAFGNDFVVPIRAGEAVEWLVK</sequence>
<comment type="function">
    <text evidence="1">Catalyzes the reversible cyclization of carbamoyl aspartate to dihydroorotate.</text>
</comment>
<comment type="catalytic activity">
    <reaction evidence="1">
        <text>(S)-dihydroorotate + H2O = N-carbamoyl-L-aspartate + H(+)</text>
        <dbReference type="Rhea" id="RHEA:24296"/>
        <dbReference type="ChEBI" id="CHEBI:15377"/>
        <dbReference type="ChEBI" id="CHEBI:15378"/>
        <dbReference type="ChEBI" id="CHEBI:30864"/>
        <dbReference type="ChEBI" id="CHEBI:32814"/>
        <dbReference type="EC" id="3.5.2.3"/>
    </reaction>
</comment>
<comment type="cofactor">
    <cofactor evidence="1">
        <name>Zn(2+)</name>
        <dbReference type="ChEBI" id="CHEBI:29105"/>
    </cofactor>
    <text evidence="1">Binds 2 Zn(2+) ions per subunit.</text>
</comment>
<comment type="pathway">
    <text evidence="1">Pyrimidine metabolism; UMP biosynthesis via de novo pathway; (S)-dihydroorotate from bicarbonate: step 3/3.</text>
</comment>
<comment type="subunit">
    <text evidence="1">Homodimer.</text>
</comment>
<comment type="similarity">
    <text evidence="1">Belongs to the metallo-dependent hydrolases superfamily. DHOase family. Class II DHOase subfamily.</text>
</comment>
<feature type="chain" id="PRO_1000024071" description="Dihydroorotase">
    <location>
        <begin position="1"/>
        <end position="342"/>
    </location>
</feature>
<feature type="active site" evidence="1">
    <location>
        <position position="246"/>
    </location>
</feature>
<feature type="binding site" evidence="1">
    <location>
        <position position="13"/>
    </location>
    <ligand>
        <name>Zn(2+)</name>
        <dbReference type="ChEBI" id="CHEBI:29105"/>
        <label>1</label>
    </ligand>
</feature>
<feature type="binding site" evidence="1">
    <location>
        <begin position="15"/>
        <end position="17"/>
    </location>
    <ligand>
        <name>substrate</name>
    </ligand>
</feature>
<feature type="binding site" evidence="1">
    <location>
        <position position="15"/>
    </location>
    <ligand>
        <name>Zn(2+)</name>
        <dbReference type="ChEBI" id="CHEBI:29105"/>
        <label>1</label>
    </ligand>
</feature>
<feature type="binding site" evidence="1">
    <location>
        <position position="41"/>
    </location>
    <ligand>
        <name>substrate</name>
    </ligand>
</feature>
<feature type="binding site" description="via carbamate group" evidence="1">
    <location>
        <position position="98"/>
    </location>
    <ligand>
        <name>Zn(2+)</name>
        <dbReference type="ChEBI" id="CHEBI:29105"/>
        <label>1</label>
    </ligand>
</feature>
<feature type="binding site" description="via carbamate group" evidence="1">
    <location>
        <position position="98"/>
    </location>
    <ligand>
        <name>Zn(2+)</name>
        <dbReference type="ChEBI" id="CHEBI:29105"/>
        <label>2</label>
    </ligand>
</feature>
<feature type="binding site" evidence="1">
    <location>
        <position position="135"/>
    </location>
    <ligand>
        <name>substrate</name>
    </ligand>
</feature>
<feature type="binding site" evidence="1">
    <location>
        <position position="135"/>
    </location>
    <ligand>
        <name>Zn(2+)</name>
        <dbReference type="ChEBI" id="CHEBI:29105"/>
        <label>2</label>
    </ligand>
</feature>
<feature type="binding site" evidence="1">
    <location>
        <position position="173"/>
    </location>
    <ligand>
        <name>Zn(2+)</name>
        <dbReference type="ChEBI" id="CHEBI:29105"/>
        <label>2</label>
    </ligand>
</feature>
<feature type="binding site" evidence="1">
    <location>
        <position position="218"/>
    </location>
    <ligand>
        <name>substrate</name>
    </ligand>
</feature>
<feature type="binding site" evidence="1">
    <location>
        <position position="246"/>
    </location>
    <ligand>
        <name>Zn(2+)</name>
        <dbReference type="ChEBI" id="CHEBI:29105"/>
        <label>1</label>
    </ligand>
</feature>
<feature type="binding site" evidence="1">
    <location>
        <position position="250"/>
    </location>
    <ligand>
        <name>substrate</name>
    </ligand>
</feature>
<feature type="binding site" evidence="1">
    <location>
        <position position="262"/>
    </location>
    <ligand>
        <name>substrate</name>
    </ligand>
</feature>
<feature type="modified residue" description="N6-carboxylysine" evidence="1">
    <location>
        <position position="98"/>
    </location>
</feature>
<keyword id="KW-0378">Hydrolase</keyword>
<keyword id="KW-0479">Metal-binding</keyword>
<keyword id="KW-0665">Pyrimidine biosynthesis</keyword>
<keyword id="KW-1185">Reference proteome</keyword>
<keyword id="KW-0862">Zinc</keyword>
<reference key="1">
    <citation type="journal article" date="2005" name="Proc. Natl. Acad. Sci. U.S.A.">
        <title>Complete genome sequence of Vibrio fischeri: a symbiotic bacterium with pathogenic congeners.</title>
        <authorList>
            <person name="Ruby E.G."/>
            <person name="Urbanowski M."/>
            <person name="Campbell J."/>
            <person name="Dunn A."/>
            <person name="Faini M."/>
            <person name="Gunsalus R."/>
            <person name="Lostroh P."/>
            <person name="Lupp C."/>
            <person name="McCann J."/>
            <person name="Millikan D."/>
            <person name="Schaefer A."/>
            <person name="Stabb E."/>
            <person name="Stevens A."/>
            <person name="Visick K."/>
            <person name="Whistler C."/>
            <person name="Greenberg E.P."/>
        </authorList>
    </citation>
    <scope>NUCLEOTIDE SEQUENCE [LARGE SCALE GENOMIC DNA]</scope>
    <source>
        <strain>ATCC 700601 / ES114</strain>
    </source>
</reference>
<dbReference type="EC" id="3.5.2.3" evidence="1"/>
<dbReference type="EMBL" id="CP000021">
    <property type="protein sequence ID" value="AAW87482.1"/>
    <property type="molecule type" value="Genomic_DNA"/>
</dbReference>
<dbReference type="RefSeq" id="WP_011263286.1">
    <property type="nucleotide sequence ID" value="NC_006841.2"/>
</dbReference>
<dbReference type="RefSeq" id="YP_206370.1">
    <property type="nucleotide sequence ID" value="NC_006841.2"/>
</dbReference>
<dbReference type="SMR" id="Q5E0G4"/>
<dbReference type="STRING" id="312309.VF_A0412"/>
<dbReference type="EnsemblBacteria" id="AAW87482">
    <property type="protein sequence ID" value="AAW87482"/>
    <property type="gene ID" value="VF_A0412"/>
</dbReference>
<dbReference type="GeneID" id="54165729"/>
<dbReference type="KEGG" id="vfi:VF_A0412"/>
<dbReference type="PATRIC" id="fig|312309.11.peg.3015"/>
<dbReference type="eggNOG" id="COG0418">
    <property type="taxonomic scope" value="Bacteria"/>
</dbReference>
<dbReference type="HOGENOM" id="CLU_041558_1_0_6"/>
<dbReference type="OrthoDB" id="9808095at2"/>
<dbReference type="UniPathway" id="UPA00070">
    <property type="reaction ID" value="UER00117"/>
</dbReference>
<dbReference type="Proteomes" id="UP000000537">
    <property type="component" value="Chromosome II"/>
</dbReference>
<dbReference type="GO" id="GO:0005829">
    <property type="term" value="C:cytosol"/>
    <property type="evidence" value="ECO:0007669"/>
    <property type="project" value="TreeGrafter"/>
</dbReference>
<dbReference type="GO" id="GO:0004151">
    <property type="term" value="F:dihydroorotase activity"/>
    <property type="evidence" value="ECO:0007669"/>
    <property type="project" value="UniProtKB-UniRule"/>
</dbReference>
<dbReference type="GO" id="GO:0008270">
    <property type="term" value="F:zinc ion binding"/>
    <property type="evidence" value="ECO:0007669"/>
    <property type="project" value="UniProtKB-UniRule"/>
</dbReference>
<dbReference type="GO" id="GO:0006207">
    <property type="term" value="P:'de novo' pyrimidine nucleobase biosynthetic process"/>
    <property type="evidence" value="ECO:0007669"/>
    <property type="project" value="TreeGrafter"/>
</dbReference>
<dbReference type="GO" id="GO:0044205">
    <property type="term" value="P:'de novo' UMP biosynthetic process"/>
    <property type="evidence" value="ECO:0007669"/>
    <property type="project" value="UniProtKB-UniRule"/>
</dbReference>
<dbReference type="CDD" id="cd01294">
    <property type="entry name" value="DHOase"/>
    <property type="match status" value="1"/>
</dbReference>
<dbReference type="FunFam" id="3.20.20.140:FF:000006">
    <property type="entry name" value="Dihydroorotase"/>
    <property type="match status" value="1"/>
</dbReference>
<dbReference type="Gene3D" id="3.20.20.140">
    <property type="entry name" value="Metal-dependent hydrolases"/>
    <property type="match status" value="1"/>
</dbReference>
<dbReference type="HAMAP" id="MF_00219">
    <property type="entry name" value="PyrC_classII"/>
    <property type="match status" value="1"/>
</dbReference>
<dbReference type="InterPro" id="IPR006680">
    <property type="entry name" value="Amidohydro-rel"/>
</dbReference>
<dbReference type="InterPro" id="IPR004721">
    <property type="entry name" value="DHOdimr"/>
</dbReference>
<dbReference type="InterPro" id="IPR002195">
    <property type="entry name" value="Dihydroorotase_CS"/>
</dbReference>
<dbReference type="InterPro" id="IPR032466">
    <property type="entry name" value="Metal_Hydrolase"/>
</dbReference>
<dbReference type="NCBIfam" id="TIGR00856">
    <property type="entry name" value="pyrC_dimer"/>
    <property type="match status" value="1"/>
</dbReference>
<dbReference type="PANTHER" id="PTHR43137">
    <property type="entry name" value="DIHYDROOROTASE"/>
    <property type="match status" value="1"/>
</dbReference>
<dbReference type="PANTHER" id="PTHR43137:SF1">
    <property type="entry name" value="DIHYDROOROTASE"/>
    <property type="match status" value="1"/>
</dbReference>
<dbReference type="Pfam" id="PF01979">
    <property type="entry name" value="Amidohydro_1"/>
    <property type="match status" value="1"/>
</dbReference>
<dbReference type="PIRSF" id="PIRSF001237">
    <property type="entry name" value="DHOdimr"/>
    <property type="match status" value="1"/>
</dbReference>
<dbReference type="SUPFAM" id="SSF51556">
    <property type="entry name" value="Metallo-dependent hydrolases"/>
    <property type="match status" value="1"/>
</dbReference>
<dbReference type="PROSITE" id="PS00482">
    <property type="entry name" value="DIHYDROOROTASE_1"/>
    <property type="match status" value="1"/>
</dbReference>
<dbReference type="PROSITE" id="PS00483">
    <property type="entry name" value="DIHYDROOROTASE_2"/>
    <property type="match status" value="1"/>
</dbReference>
<protein>
    <recommendedName>
        <fullName evidence="1">Dihydroorotase</fullName>
        <shortName evidence="1">DHOase</shortName>
        <ecNumber evidence="1">3.5.2.3</ecNumber>
    </recommendedName>
</protein>
<proteinExistence type="inferred from homology"/>
<name>PYRC_ALIF1</name>
<evidence type="ECO:0000255" key="1">
    <source>
        <dbReference type="HAMAP-Rule" id="MF_00219"/>
    </source>
</evidence>